<name>PAND_STAAR</name>
<keyword id="KW-0068">Autocatalytic cleavage</keyword>
<keyword id="KW-0963">Cytoplasm</keyword>
<keyword id="KW-0210">Decarboxylase</keyword>
<keyword id="KW-0456">Lyase</keyword>
<keyword id="KW-0566">Pantothenate biosynthesis</keyword>
<keyword id="KW-0670">Pyruvate</keyword>
<keyword id="KW-0704">Schiff base</keyword>
<keyword id="KW-0865">Zymogen</keyword>
<dbReference type="EC" id="4.1.1.11" evidence="1"/>
<dbReference type="EMBL" id="BX571856">
    <property type="protein sequence ID" value="CAG41652.1"/>
    <property type="molecule type" value="Genomic_DNA"/>
</dbReference>
<dbReference type="RefSeq" id="WP_000621532.1">
    <property type="nucleotide sequence ID" value="NC_002952.2"/>
</dbReference>
<dbReference type="SMR" id="Q6GDK6"/>
<dbReference type="GeneID" id="98346911"/>
<dbReference type="KEGG" id="sar:SAR2675"/>
<dbReference type="HOGENOM" id="CLU_115305_2_0_9"/>
<dbReference type="UniPathway" id="UPA00028">
    <property type="reaction ID" value="UER00002"/>
</dbReference>
<dbReference type="Proteomes" id="UP000000596">
    <property type="component" value="Chromosome"/>
</dbReference>
<dbReference type="GO" id="GO:0005829">
    <property type="term" value="C:cytosol"/>
    <property type="evidence" value="ECO:0007669"/>
    <property type="project" value="TreeGrafter"/>
</dbReference>
<dbReference type="GO" id="GO:0004068">
    <property type="term" value="F:aspartate 1-decarboxylase activity"/>
    <property type="evidence" value="ECO:0007669"/>
    <property type="project" value="UniProtKB-UniRule"/>
</dbReference>
<dbReference type="GO" id="GO:0006523">
    <property type="term" value="P:alanine biosynthetic process"/>
    <property type="evidence" value="ECO:0007669"/>
    <property type="project" value="InterPro"/>
</dbReference>
<dbReference type="GO" id="GO:0015940">
    <property type="term" value="P:pantothenate biosynthetic process"/>
    <property type="evidence" value="ECO:0007669"/>
    <property type="project" value="UniProtKB-UniRule"/>
</dbReference>
<dbReference type="CDD" id="cd06919">
    <property type="entry name" value="Asp_decarbox"/>
    <property type="match status" value="1"/>
</dbReference>
<dbReference type="Gene3D" id="2.40.40.20">
    <property type="match status" value="1"/>
</dbReference>
<dbReference type="HAMAP" id="MF_00446">
    <property type="entry name" value="PanD"/>
    <property type="match status" value="1"/>
</dbReference>
<dbReference type="InterPro" id="IPR009010">
    <property type="entry name" value="Asp_de-COase-like_dom_sf"/>
</dbReference>
<dbReference type="InterPro" id="IPR003190">
    <property type="entry name" value="Asp_decarbox"/>
</dbReference>
<dbReference type="NCBIfam" id="TIGR00223">
    <property type="entry name" value="panD"/>
    <property type="match status" value="1"/>
</dbReference>
<dbReference type="PANTHER" id="PTHR21012">
    <property type="entry name" value="ASPARTATE 1-DECARBOXYLASE"/>
    <property type="match status" value="1"/>
</dbReference>
<dbReference type="PANTHER" id="PTHR21012:SF0">
    <property type="entry name" value="ASPARTATE 1-DECARBOXYLASE"/>
    <property type="match status" value="1"/>
</dbReference>
<dbReference type="Pfam" id="PF02261">
    <property type="entry name" value="Asp_decarbox"/>
    <property type="match status" value="1"/>
</dbReference>
<dbReference type="PIRSF" id="PIRSF006246">
    <property type="entry name" value="Asp_decarbox"/>
    <property type="match status" value="1"/>
</dbReference>
<dbReference type="SUPFAM" id="SSF50692">
    <property type="entry name" value="ADC-like"/>
    <property type="match status" value="1"/>
</dbReference>
<organism>
    <name type="scientific">Staphylococcus aureus (strain MRSA252)</name>
    <dbReference type="NCBI Taxonomy" id="282458"/>
    <lineage>
        <taxon>Bacteria</taxon>
        <taxon>Bacillati</taxon>
        <taxon>Bacillota</taxon>
        <taxon>Bacilli</taxon>
        <taxon>Bacillales</taxon>
        <taxon>Staphylococcaceae</taxon>
        <taxon>Staphylococcus</taxon>
    </lineage>
</organism>
<evidence type="ECO:0000255" key="1">
    <source>
        <dbReference type="HAMAP-Rule" id="MF_00446"/>
    </source>
</evidence>
<gene>
    <name evidence="1" type="primary">panD</name>
    <name type="ordered locus">SAR2675</name>
</gene>
<comment type="function">
    <text evidence="1">Catalyzes the pyruvoyl-dependent decarboxylation of aspartate to produce beta-alanine.</text>
</comment>
<comment type="catalytic activity">
    <reaction evidence="1">
        <text>L-aspartate + H(+) = beta-alanine + CO2</text>
        <dbReference type="Rhea" id="RHEA:19497"/>
        <dbReference type="ChEBI" id="CHEBI:15378"/>
        <dbReference type="ChEBI" id="CHEBI:16526"/>
        <dbReference type="ChEBI" id="CHEBI:29991"/>
        <dbReference type="ChEBI" id="CHEBI:57966"/>
        <dbReference type="EC" id="4.1.1.11"/>
    </reaction>
</comment>
<comment type="cofactor">
    <cofactor evidence="1">
        <name>pyruvate</name>
        <dbReference type="ChEBI" id="CHEBI:15361"/>
    </cofactor>
    <text evidence="1">Binds 1 pyruvoyl group covalently per subunit.</text>
</comment>
<comment type="pathway">
    <text evidence="1">Cofactor biosynthesis; (R)-pantothenate biosynthesis; beta-alanine from L-aspartate: step 1/1.</text>
</comment>
<comment type="subunit">
    <text evidence="1">Heterooctamer of four alpha and four beta subunits.</text>
</comment>
<comment type="subcellular location">
    <subcellularLocation>
        <location evidence="1">Cytoplasm</location>
    </subcellularLocation>
</comment>
<comment type="PTM">
    <text evidence="1">Is synthesized initially as an inactive proenzyme, which is activated by self-cleavage at a specific serine bond to produce a beta-subunit with a hydroxyl group at its C-terminus and an alpha-subunit with a pyruvoyl group at its N-terminus.</text>
</comment>
<comment type="similarity">
    <text evidence="1">Belongs to the PanD family.</text>
</comment>
<sequence length="127" mass="14050">MIRTMMNAKIHRARVTESNLNYVGSITIDSDILEAVDILPNEKVAIVNNNNGARFETYVIAGERGSGKICLNGAASRLVEVGDVVIIMTYAQLNEEEIKNHAPKVAVMNEDNVIIEMIHEKENTIVL</sequence>
<proteinExistence type="inferred from homology"/>
<reference key="1">
    <citation type="journal article" date="2004" name="Proc. Natl. Acad. Sci. U.S.A.">
        <title>Complete genomes of two clinical Staphylococcus aureus strains: evidence for the rapid evolution of virulence and drug resistance.</title>
        <authorList>
            <person name="Holden M.T.G."/>
            <person name="Feil E.J."/>
            <person name="Lindsay J.A."/>
            <person name="Peacock S.J."/>
            <person name="Day N.P.J."/>
            <person name="Enright M.C."/>
            <person name="Foster T.J."/>
            <person name="Moore C.E."/>
            <person name="Hurst L."/>
            <person name="Atkin R."/>
            <person name="Barron A."/>
            <person name="Bason N."/>
            <person name="Bentley S.D."/>
            <person name="Chillingworth C."/>
            <person name="Chillingworth T."/>
            <person name="Churcher C."/>
            <person name="Clark L."/>
            <person name="Corton C."/>
            <person name="Cronin A."/>
            <person name="Doggett J."/>
            <person name="Dowd L."/>
            <person name="Feltwell T."/>
            <person name="Hance Z."/>
            <person name="Harris B."/>
            <person name="Hauser H."/>
            <person name="Holroyd S."/>
            <person name="Jagels K."/>
            <person name="James K.D."/>
            <person name="Lennard N."/>
            <person name="Line A."/>
            <person name="Mayes R."/>
            <person name="Moule S."/>
            <person name="Mungall K."/>
            <person name="Ormond D."/>
            <person name="Quail M.A."/>
            <person name="Rabbinowitsch E."/>
            <person name="Rutherford K.M."/>
            <person name="Sanders M."/>
            <person name="Sharp S."/>
            <person name="Simmonds M."/>
            <person name="Stevens K."/>
            <person name="Whitehead S."/>
            <person name="Barrell B.G."/>
            <person name="Spratt B.G."/>
            <person name="Parkhill J."/>
        </authorList>
    </citation>
    <scope>NUCLEOTIDE SEQUENCE [LARGE SCALE GENOMIC DNA]</scope>
    <source>
        <strain>MRSA252</strain>
    </source>
</reference>
<feature type="chain" id="PRO_0000023163" description="Aspartate 1-decarboxylase beta chain" evidence="1">
    <location>
        <begin position="1"/>
        <end position="24"/>
    </location>
</feature>
<feature type="chain" id="PRO_0000023164" description="Aspartate 1-decarboxylase alpha chain" evidence="1">
    <location>
        <begin position="25"/>
        <end position="127"/>
    </location>
</feature>
<feature type="active site" description="Schiff-base intermediate with substrate; via pyruvic acid" evidence="1">
    <location>
        <position position="25"/>
    </location>
</feature>
<feature type="active site" description="Proton donor" evidence="1">
    <location>
        <position position="58"/>
    </location>
</feature>
<feature type="binding site" evidence="1">
    <location>
        <position position="57"/>
    </location>
    <ligand>
        <name>substrate</name>
    </ligand>
</feature>
<feature type="binding site" evidence="1">
    <location>
        <begin position="73"/>
        <end position="75"/>
    </location>
    <ligand>
        <name>substrate</name>
    </ligand>
</feature>
<feature type="modified residue" description="Pyruvic acid (Ser)" evidence="1">
    <location>
        <position position="25"/>
    </location>
</feature>
<accession>Q6GDK6</accession>
<protein>
    <recommendedName>
        <fullName evidence="1">Aspartate 1-decarboxylase</fullName>
        <ecNumber evidence="1">4.1.1.11</ecNumber>
    </recommendedName>
    <alternativeName>
        <fullName evidence="1">Aspartate alpha-decarboxylase</fullName>
    </alternativeName>
    <component>
        <recommendedName>
            <fullName evidence="1">Aspartate 1-decarboxylase beta chain</fullName>
        </recommendedName>
    </component>
    <component>
        <recommendedName>
            <fullName evidence="1">Aspartate 1-decarboxylase alpha chain</fullName>
        </recommendedName>
    </component>
</protein>